<organism>
    <name type="scientific">Acidovorax sp. (strain JS42)</name>
    <dbReference type="NCBI Taxonomy" id="232721"/>
    <lineage>
        <taxon>Bacteria</taxon>
        <taxon>Pseudomonadati</taxon>
        <taxon>Pseudomonadota</taxon>
        <taxon>Betaproteobacteria</taxon>
        <taxon>Burkholderiales</taxon>
        <taxon>Comamonadaceae</taxon>
        <taxon>Acidovorax</taxon>
    </lineage>
</organism>
<accession>A1WB09</accession>
<name>ARLY_ACISJ</name>
<reference key="1">
    <citation type="submission" date="2006-12" db="EMBL/GenBank/DDBJ databases">
        <title>Complete sequence of chromosome 1 of Acidovorax sp. JS42.</title>
        <authorList>
            <person name="Copeland A."/>
            <person name="Lucas S."/>
            <person name="Lapidus A."/>
            <person name="Barry K."/>
            <person name="Detter J.C."/>
            <person name="Glavina del Rio T."/>
            <person name="Dalin E."/>
            <person name="Tice H."/>
            <person name="Pitluck S."/>
            <person name="Chertkov O."/>
            <person name="Brettin T."/>
            <person name="Bruce D."/>
            <person name="Han C."/>
            <person name="Tapia R."/>
            <person name="Gilna P."/>
            <person name="Schmutz J."/>
            <person name="Larimer F."/>
            <person name="Land M."/>
            <person name="Hauser L."/>
            <person name="Kyrpides N."/>
            <person name="Kim E."/>
            <person name="Stahl D."/>
            <person name="Richardson P."/>
        </authorList>
    </citation>
    <scope>NUCLEOTIDE SEQUENCE [LARGE SCALE GENOMIC DNA]</scope>
    <source>
        <strain>JS42</strain>
    </source>
</reference>
<gene>
    <name evidence="1" type="primary">argH</name>
    <name type="ordered locus">Ajs_3312</name>
</gene>
<feature type="chain" id="PRO_0000321425" description="Argininosuccinate lyase">
    <location>
        <begin position="1"/>
        <end position="486"/>
    </location>
</feature>
<proteinExistence type="inferred from homology"/>
<dbReference type="EC" id="4.3.2.1" evidence="1"/>
<dbReference type="EMBL" id="CP000539">
    <property type="protein sequence ID" value="ABM43434.1"/>
    <property type="molecule type" value="Genomic_DNA"/>
</dbReference>
<dbReference type="SMR" id="A1WB09"/>
<dbReference type="STRING" id="232721.Ajs_3312"/>
<dbReference type="KEGG" id="ajs:Ajs_3312"/>
<dbReference type="eggNOG" id="COG0165">
    <property type="taxonomic scope" value="Bacteria"/>
</dbReference>
<dbReference type="HOGENOM" id="CLU_027272_2_3_4"/>
<dbReference type="UniPathway" id="UPA00068">
    <property type="reaction ID" value="UER00114"/>
</dbReference>
<dbReference type="Proteomes" id="UP000000645">
    <property type="component" value="Chromosome"/>
</dbReference>
<dbReference type="GO" id="GO:0005829">
    <property type="term" value="C:cytosol"/>
    <property type="evidence" value="ECO:0007669"/>
    <property type="project" value="TreeGrafter"/>
</dbReference>
<dbReference type="GO" id="GO:0004056">
    <property type="term" value="F:argininosuccinate lyase activity"/>
    <property type="evidence" value="ECO:0007669"/>
    <property type="project" value="UniProtKB-UniRule"/>
</dbReference>
<dbReference type="GO" id="GO:0042450">
    <property type="term" value="P:arginine biosynthetic process via ornithine"/>
    <property type="evidence" value="ECO:0007669"/>
    <property type="project" value="InterPro"/>
</dbReference>
<dbReference type="GO" id="GO:0006526">
    <property type="term" value="P:L-arginine biosynthetic process"/>
    <property type="evidence" value="ECO:0007669"/>
    <property type="project" value="UniProtKB-UniRule"/>
</dbReference>
<dbReference type="CDD" id="cd01359">
    <property type="entry name" value="Argininosuccinate_lyase"/>
    <property type="match status" value="1"/>
</dbReference>
<dbReference type="FunFam" id="1.10.275.10:FF:000002">
    <property type="entry name" value="Argininosuccinate lyase"/>
    <property type="match status" value="1"/>
</dbReference>
<dbReference type="FunFam" id="1.10.40.30:FF:000001">
    <property type="entry name" value="Argininosuccinate lyase"/>
    <property type="match status" value="1"/>
</dbReference>
<dbReference type="FunFam" id="1.20.200.10:FF:000015">
    <property type="entry name" value="argininosuccinate lyase isoform X2"/>
    <property type="match status" value="1"/>
</dbReference>
<dbReference type="Gene3D" id="1.10.40.30">
    <property type="entry name" value="Fumarase/aspartase (C-terminal domain)"/>
    <property type="match status" value="1"/>
</dbReference>
<dbReference type="Gene3D" id="1.20.200.10">
    <property type="entry name" value="Fumarase/aspartase (Central domain)"/>
    <property type="match status" value="1"/>
</dbReference>
<dbReference type="Gene3D" id="1.10.275.10">
    <property type="entry name" value="Fumarase/aspartase (N-terminal domain)"/>
    <property type="match status" value="1"/>
</dbReference>
<dbReference type="HAMAP" id="MF_00006">
    <property type="entry name" value="Arg_succ_lyase"/>
    <property type="match status" value="1"/>
</dbReference>
<dbReference type="InterPro" id="IPR029419">
    <property type="entry name" value="Arg_succ_lyase_C"/>
</dbReference>
<dbReference type="InterPro" id="IPR009049">
    <property type="entry name" value="Argininosuccinate_lyase"/>
</dbReference>
<dbReference type="InterPro" id="IPR024083">
    <property type="entry name" value="Fumarase/histidase_N"/>
</dbReference>
<dbReference type="InterPro" id="IPR020557">
    <property type="entry name" value="Fumarate_lyase_CS"/>
</dbReference>
<dbReference type="InterPro" id="IPR000362">
    <property type="entry name" value="Fumarate_lyase_fam"/>
</dbReference>
<dbReference type="InterPro" id="IPR022761">
    <property type="entry name" value="Fumarate_lyase_N"/>
</dbReference>
<dbReference type="InterPro" id="IPR008948">
    <property type="entry name" value="L-Aspartase-like"/>
</dbReference>
<dbReference type="NCBIfam" id="TIGR00838">
    <property type="entry name" value="argH"/>
    <property type="match status" value="1"/>
</dbReference>
<dbReference type="PANTHER" id="PTHR43814">
    <property type="entry name" value="ARGININOSUCCINATE LYASE"/>
    <property type="match status" value="1"/>
</dbReference>
<dbReference type="PANTHER" id="PTHR43814:SF1">
    <property type="entry name" value="ARGININOSUCCINATE LYASE"/>
    <property type="match status" value="1"/>
</dbReference>
<dbReference type="Pfam" id="PF14698">
    <property type="entry name" value="ASL_C2"/>
    <property type="match status" value="1"/>
</dbReference>
<dbReference type="Pfam" id="PF00206">
    <property type="entry name" value="Lyase_1"/>
    <property type="match status" value="1"/>
</dbReference>
<dbReference type="PRINTS" id="PR00145">
    <property type="entry name" value="ARGSUCLYASE"/>
</dbReference>
<dbReference type="PRINTS" id="PR00149">
    <property type="entry name" value="FUMRATELYASE"/>
</dbReference>
<dbReference type="SUPFAM" id="SSF48557">
    <property type="entry name" value="L-aspartase-like"/>
    <property type="match status" value="1"/>
</dbReference>
<dbReference type="PROSITE" id="PS00163">
    <property type="entry name" value="FUMARATE_LYASES"/>
    <property type="match status" value="1"/>
</dbReference>
<keyword id="KW-0028">Amino-acid biosynthesis</keyword>
<keyword id="KW-0055">Arginine biosynthesis</keyword>
<keyword id="KW-0963">Cytoplasm</keyword>
<keyword id="KW-0456">Lyase</keyword>
<comment type="catalytic activity">
    <reaction evidence="1">
        <text>2-(N(omega)-L-arginino)succinate = fumarate + L-arginine</text>
        <dbReference type="Rhea" id="RHEA:24020"/>
        <dbReference type="ChEBI" id="CHEBI:29806"/>
        <dbReference type="ChEBI" id="CHEBI:32682"/>
        <dbReference type="ChEBI" id="CHEBI:57472"/>
        <dbReference type="EC" id="4.3.2.1"/>
    </reaction>
</comment>
<comment type="pathway">
    <text evidence="1">Amino-acid biosynthesis; L-arginine biosynthesis; L-arginine from L-ornithine and carbamoyl phosphate: step 3/3.</text>
</comment>
<comment type="subcellular location">
    <subcellularLocation>
        <location evidence="1">Cytoplasm</location>
    </subcellularLocation>
</comment>
<comment type="similarity">
    <text evidence="1">Belongs to the lyase 1 family. Argininosuccinate lyase subfamily.</text>
</comment>
<protein>
    <recommendedName>
        <fullName evidence="1">Argininosuccinate lyase</fullName>
        <shortName evidence="1">ASAL</shortName>
        <ecNumber evidence="1">4.3.2.1</ecNumber>
    </recommendedName>
    <alternativeName>
        <fullName evidence="1">Arginosuccinase</fullName>
    </alternativeName>
</protein>
<evidence type="ECO:0000255" key="1">
    <source>
        <dbReference type="HAMAP-Rule" id="MF_00006"/>
    </source>
</evidence>
<sequence length="486" mass="53015">MSSSSASQPSHDQLATKAQAWSALFSEPMSDLVKRYTSSVFFDKRLWQADIAGSLAHAEMLAAQGIISAQDHADIQKGMAQITQEIASGAFEWKLDLEDVHLNIEARLTQLVGDAGKRLHTGRSRNDQVATDVRLWLRGEIDLIEGLLSELQLSLVEVAEQNVEVILPGFTHLQVAQPVSFAHHLLAYVEMFARDAERMRDVRRRVNVLPLGSAALAGTTYPLDRERVAKTLGMEGVCQNSLDGVSDRDFAIEFTAAASLCMVHVSRLSEELIIWMSQNFGFIKIADRFTTGSSIMPQKKNPDVPELARGKTGRVVGHLMGLITLMKGQPLAYNKDNQEDKEPLFDTVDTLKDTLRIFAEMIGGQMNPATGCKDGGITVNAEAMRAAALKGYATATDLADYLVKKGLPFRDAHETVAHAVKAAVSHSVDLSELPLAVLQGFHPAIEKDVFDALSLQGSLNARNTLGGTAPAQVRTQLARHRARLSA</sequence>